<organism>
    <name type="scientific">Nitrobacter winogradskyi (strain ATCC 25391 / DSM 10237 / CIP 104748 / NCIMB 11846 / Nb-255)</name>
    <dbReference type="NCBI Taxonomy" id="323098"/>
    <lineage>
        <taxon>Bacteria</taxon>
        <taxon>Pseudomonadati</taxon>
        <taxon>Pseudomonadota</taxon>
        <taxon>Alphaproteobacteria</taxon>
        <taxon>Hyphomicrobiales</taxon>
        <taxon>Nitrobacteraceae</taxon>
        <taxon>Nitrobacter</taxon>
    </lineage>
</organism>
<dbReference type="EMBL" id="CP000115">
    <property type="protein sequence ID" value="ABA03289.1"/>
    <property type="molecule type" value="Genomic_DNA"/>
</dbReference>
<dbReference type="RefSeq" id="WP_011313360.1">
    <property type="nucleotide sequence ID" value="NC_007406.1"/>
</dbReference>
<dbReference type="SMR" id="Q3SWQ2"/>
<dbReference type="STRING" id="323098.Nwi_0021"/>
<dbReference type="KEGG" id="nwi:Nwi_0021"/>
<dbReference type="eggNOG" id="COG0779">
    <property type="taxonomic scope" value="Bacteria"/>
</dbReference>
<dbReference type="HOGENOM" id="CLU_070525_0_0_5"/>
<dbReference type="OrthoDB" id="9805006at2"/>
<dbReference type="Proteomes" id="UP000002531">
    <property type="component" value="Chromosome"/>
</dbReference>
<dbReference type="GO" id="GO:0005829">
    <property type="term" value="C:cytosol"/>
    <property type="evidence" value="ECO:0007669"/>
    <property type="project" value="TreeGrafter"/>
</dbReference>
<dbReference type="GO" id="GO:0000028">
    <property type="term" value="P:ribosomal small subunit assembly"/>
    <property type="evidence" value="ECO:0007669"/>
    <property type="project" value="TreeGrafter"/>
</dbReference>
<dbReference type="GO" id="GO:0006412">
    <property type="term" value="P:translation"/>
    <property type="evidence" value="ECO:0007669"/>
    <property type="project" value="TreeGrafter"/>
</dbReference>
<dbReference type="CDD" id="cd01734">
    <property type="entry name" value="YlxS_C"/>
    <property type="match status" value="1"/>
</dbReference>
<dbReference type="Gene3D" id="2.30.30.180">
    <property type="entry name" value="Ribosome maturation factor RimP, C-terminal domain"/>
    <property type="match status" value="1"/>
</dbReference>
<dbReference type="Gene3D" id="3.30.300.70">
    <property type="entry name" value="RimP-like superfamily, N-terminal"/>
    <property type="match status" value="1"/>
</dbReference>
<dbReference type="HAMAP" id="MF_01077">
    <property type="entry name" value="RimP"/>
    <property type="match status" value="1"/>
</dbReference>
<dbReference type="InterPro" id="IPR003728">
    <property type="entry name" value="Ribosome_maturation_RimP"/>
</dbReference>
<dbReference type="InterPro" id="IPR028998">
    <property type="entry name" value="RimP_C"/>
</dbReference>
<dbReference type="InterPro" id="IPR036847">
    <property type="entry name" value="RimP_C_sf"/>
</dbReference>
<dbReference type="InterPro" id="IPR028989">
    <property type="entry name" value="RimP_N"/>
</dbReference>
<dbReference type="InterPro" id="IPR035956">
    <property type="entry name" value="RimP_N_sf"/>
</dbReference>
<dbReference type="NCBIfam" id="NF000932">
    <property type="entry name" value="PRK00092.2-5"/>
    <property type="match status" value="1"/>
</dbReference>
<dbReference type="NCBIfam" id="NF000933">
    <property type="entry name" value="PRK00092.2-6"/>
    <property type="match status" value="1"/>
</dbReference>
<dbReference type="PANTHER" id="PTHR33867">
    <property type="entry name" value="RIBOSOME MATURATION FACTOR RIMP"/>
    <property type="match status" value="1"/>
</dbReference>
<dbReference type="PANTHER" id="PTHR33867:SF1">
    <property type="entry name" value="RIBOSOME MATURATION FACTOR RIMP"/>
    <property type="match status" value="1"/>
</dbReference>
<dbReference type="Pfam" id="PF17384">
    <property type="entry name" value="DUF150_C"/>
    <property type="match status" value="1"/>
</dbReference>
<dbReference type="Pfam" id="PF02576">
    <property type="entry name" value="RimP_N"/>
    <property type="match status" value="1"/>
</dbReference>
<dbReference type="SUPFAM" id="SSF74942">
    <property type="entry name" value="YhbC-like, C-terminal domain"/>
    <property type="match status" value="1"/>
</dbReference>
<dbReference type="SUPFAM" id="SSF75420">
    <property type="entry name" value="YhbC-like, N-terminal domain"/>
    <property type="match status" value="1"/>
</dbReference>
<gene>
    <name evidence="1" type="primary">rimP</name>
    <name type="ordered locus">Nwi_0021</name>
</gene>
<reference key="1">
    <citation type="journal article" date="2006" name="Appl. Environ. Microbiol.">
        <title>Genome sequence of the chemolithoautotrophic nitrite-oxidizing bacterium Nitrobacter winogradskyi Nb-255.</title>
        <authorList>
            <person name="Starkenburg S.R."/>
            <person name="Chain P.S.G."/>
            <person name="Sayavedra-Soto L.A."/>
            <person name="Hauser L."/>
            <person name="Land M.L."/>
            <person name="Larimer F.W."/>
            <person name="Malfatti S.A."/>
            <person name="Klotz M.G."/>
            <person name="Bottomley P.J."/>
            <person name="Arp D.J."/>
            <person name="Hickey W.J."/>
        </authorList>
    </citation>
    <scope>NUCLEOTIDE SEQUENCE [LARGE SCALE GENOMIC DNA]</scope>
    <source>
        <strain>ATCC 25391 / DSM 10237 / CIP 104748 / NCIMB 11846 / Nb-255</strain>
    </source>
</reference>
<accession>Q3SWQ2</accession>
<comment type="function">
    <text evidence="1">Required for maturation of 30S ribosomal subunits.</text>
</comment>
<comment type="subcellular location">
    <subcellularLocation>
        <location evidence="1">Cytoplasm</location>
    </subcellularLocation>
</comment>
<comment type="similarity">
    <text evidence="1">Belongs to the RimP family.</text>
</comment>
<keyword id="KW-0963">Cytoplasm</keyword>
<keyword id="KW-1185">Reference proteome</keyword>
<keyword id="KW-0690">Ribosome biogenesis</keyword>
<feature type="chain" id="PRO_0000229255" description="Ribosome maturation factor RimP">
    <location>
        <begin position="1"/>
        <end position="260"/>
    </location>
</feature>
<feature type="region of interest" description="Disordered" evidence="2">
    <location>
        <begin position="198"/>
        <end position="260"/>
    </location>
</feature>
<feature type="compositionally biased region" description="Basic and acidic residues" evidence="2">
    <location>
        <begin position="210"/>
        <end position="228"/>
    </location>
</feature>
<feature type="compositionally biased region" description="Basic and acidic residues" evidence="2">
    <location>
        <begin position="238"/>
        <end position="254"/>
    </location>
</feature>
<name>RIMP_NITWN</name>
<sequence>MTDPSAQNPDHELLDEPRLVVEPGVAARVAAIAAPVLQGMGYRLVRIKVSGEAGCTVQIMAERPDGSIQIEDCEAISKALSPVLDVADPIDKAYRLEISSPGIDRPLVRRSDFERYAGHLAKIEMAVAHQGRKRFRGVLQGVEDNAVRLHRDDIRNNDDESEVMLVMEDIADARLVLTDELIAESMRRGKIAEREMKQSLGILPPPPPHAKTDPAKRGTPKPKLENGKKAPGKIPPKNTKEHRLAAERLRRGDIDPIEGE</sequence>
<evidence type="ECO:0000255" key="1">
    <source>
        <dbReference type="HAMAP-Rule" id="MF_01077"/>
    </source>
</evidence>
<evidence type="ECO:0000256" key="2">
    <source>
        <dbReference type="SAM" id="MobiDB-lite"/>
    </source>
</evidence>
<proteinExistence type="inferred from homology"/>
<protein>
    <recommendedName>
        <fullName evidence="1">Ribosome maturation factor RimP</fullName>
    </recommendedName>
</protein>